<protein>
    <recommendedName>
        <fullName>Androctonin</fullName>
    </recommendedName>
</protein>
<name>ANDT_ANDAU</name>
<reference key="1">
    <citation type="journal article" date="1996" name="J. Biol. Chem.">
        <title>Characterization of novel cysteine-rich antimicrobial peptides from scorpion blood.</title>
        <authorList>
            <person name="Ehret-Sabatier L."/>
            <person name="Loew D."/>
            <person name="Goyffon M."/>
            <person name="Fehlbaum P."/>
            <person name="Hoffmann J.A."/>
            <person name="van Dorsselaer A."/>
            <person name="Bulet P."/>
        </authorList>
    </citation>
    <scope>PROTEIN SEQUENCE</scope>
    <scope>CHARACTERIZATION</scope>
    <scope>MASS SPECTROMETRY</scope>
    <scope>SYNTHESIS</scope>
    <source>
        <strain>Hector</strain>
        <tissue>Hemolymph</tissue>
    </source>
</reference>
<reference key="2">
    <citation type="journal article" date="2000" name="Biochem. J.">
        <title>Androctonin, a hydrophilic disulphide-bridged non-haemolytic anti-microbial peptide: a plausible mode of action.</title>
        <authorList>
            <person name="Hetru C."/>
            <person name="Letellier L."/>
            <person name="Oren Z."/>
            <person name="Hoffmann J.A."/>
            <person name="Shai Y."/>
        </authorList>
    </citation>
    <scope>SYNTHESIS OF D-AMINO ACID ENANTIOMER</scope>
    <scope>CHARACTERIZATION</scope>
    <source>
        <strain>Hector</strain>
    </source>
</reference>
<reference key="3">
    <citation type="journal article" date="1999" name="J. Biomol. Struct. Dyn.">
        <title>Androctonin, a novel antimicrobial peptide from scorpion Androctonus australis: solution structure and molecular dynamics simulations in the presence of a lipid monolayer.</title>
        <authorList>
            <person name="Mandard N."/>
            <person name="Sy D."/>
            <person name="Maufrais C."/>
            <person name="Bonmatin J.-M."/>
            <person name="Bulet P."/>
            <person name="Hetru C."/>
            <person name="Vovelle F."/>
        </authorList>
    </citation>
    <scope>STRUCTURE BY NMR</scope>
    <source>
        <strain>Hector</strain>
    </source>
</reference>
<evidence type="ECO:0000269" key="1">
    <source>
    </source>
</evidence>
<evidence type="ECO:0007829" key="2">
    <source>
        <dbReference type="PDB" id="1CZ6"/>
    </source>
</evidence>
<sequence>RSVCRQIKICRRRGGCYYKCTNRPY</sequence>
<keyword id="KW-0002">3D-structure</keyword>
<keyword id="KW-0044">Antibiotic</keyword>
<keyword id="KW-0929">Antimicrobial</keyword>
<keyword id="KW-0903">Direct protein sequencing</keyword>
<keyword id="KW-1015">Disulfide bond</keyword>
<keyword id="KW-0295">Fungicide</keyword>
<keyword id="KW-0964">Secreted</keyword>
<organism>
    <name type="scientific">Androctonus australis</name>
    <name type="common">Sahara scorpion</name>
    <dbReference type="NCBI Taxonomy" id="6858"/>
    <lineage>
        <taxon>Eukaryota</taxon>
        <taxon>Metazoa</taxon>
        <taxon>Ecdysozoa</taxon>
        <taxon>Arthropoda</taxon>
        <taxon>Chelicerata</taxon>
        <taxon>Arachnida</taxon>
        <taxon>Scorpiones</taxon>
        <taxon>Buthida</taxon>
        <taxon>Buthoidea</taxon>
        <taxon>Buthidae</taxon>
        <taxon>Androctonus</taxon>
    </lineage>
</organism>
<proteinExistence type="evidence at protein level"/>
<feature type="peptide" id="PRO_0000043596" description="Androctonin">
    <location>
        <begin position="1"/>
        <end position="25"/>
    </location>
</feature>
<feature type="disulfide bond">
    <location>
        <begin position="4"/>
        <end position="20"/>
    </location>
</feature>
<feature type="disulfide bond">
    <location>
        <begin position="10"/>
        <end position="16"/>
    </location>
</feature>
<feature type="strand" evidence="2">
    <location>
        <begin position="6"/>
        <end position="9"/>
    </location>
</feature>
<feature type="strand" evidence="2">
    <location>
        <begin position="12"/>
        <end position="14"/>
    </location>
</feature>
<feature type="strand" evidence="2">
    <location>
        <begin position="17"/>
        <end position="20"/>
    </location>
</feature>
<dbReference type="PDB" id="1CZ6">
    <property type="method" value="NMR"/>
    <property type="chains" value="A=1-25"/>
</dbReference>
<dbReference type="PDBsum" id="1CZ6"/>
<dbReference type="SMR" id="P56684"/>
<dbReference type="EvolutionaryTrace" id="P56684"/>
<dbReference type="GO" id="GO:0005576">
    <property type="term" value="C:extracellular region"/>
    <property type="evidence" value="ECO:0007669"/>
    <property type="project" value="UniProtKB-SubCell"/>
</dbReference>
<dbReference type="GO" id="GO:0042742">
    <property type="term" value="P:defense response to bacterium"/>
    <property type="evidence" value="ECO:0007669"/>
    <property type="project" value="UniProtKB-KW"/>
</dbReference>
<dbReference type="GO" id="GO:0050832">
    <property type="term" value="P:defense response to fungus"/>
    <property type="evidence" value="ECO:0007669"/>
    <property type="project" value="UniProtKB-KW"/>
</dbReference>
<dbReference type="GO" id="GO:0031640">
    <property type="term" value="P:killing of cells of another organism"/>
    <property type="evidence" value="ECO:0007669"/>
    <property type="project" value="UniProtKB-KW"/>
</dbReference>
<comment type="function">
    <text>Active against both bacteria (Gram-positive and Gram-negative) and filamentous fungi. Acts on the membrane of the bacterial cells. It destabilize a membrane by modifying its properties.</text>
</comment>
<comment type="subcellular location">
    <subcellularLocation>
        <location>Secreted</location>
    </subcellularLocation>
</comment>
<comment type="mass spectrometry"/>
<accession>P56684</accession>
<accession>P81616</accession>